<proteinExistence type="inferred from homology"/>
<evidence type="ECO:0000250" key="1">
    <source>
        <dbReference type="UniProtKB" id="B9EJA2"/>
    </source>
</evidence>
<evidence type="ECO:0000250" key="2">
    <source>
        <dbReference type="UniProtKB" id="Q2IBD4"/>
    </source>
</evidence>
<evidence type="ECO:0000250" key="3">
    <source>
        <dbReference type="UniProtKB" id="Q8WZ74"/>
    </source>
</evidence>
<evidence type="ECO:0000255" key="4"/>
<evidence type="ECO:0000256" key="5">
    <source>
        <dbReference type="SAM" id="MobiDB-lite"/>
    </source>
</evidence>
<sequence length="1647" mass="178745">MATDGASCEPDASRAPEEAAGATAEAARKEFDVDTLSKSELRMLLSVMEGELEARDLVIEALRARRKEVFIQERYGRFNLNDPFLALQRDYEAGAGDKEKKPVCTNPLSILEAVMAHCRKMQERMATQLAAAESRQKKLEMEKLQLQALEQEHKKLAARLEEERGKNKQVVLMLVKECKQLSGKVIEEAQKLEEAMAKLEEEKKKTNELEEELSAEKRRSTEMEAQMEKQLSEFDTEREQLRAKLNREEAHTTDLKEEIDKMKKMIEQLKRGSDSKPSLSLPRKTKDRRLVSISVGTEGPLTRSVACQTDLAIEGTDHVKKSPLTVPGKPSPGSAKGSVCANAAHVRPGMDRQASHGDLTGSSAPSLPPASANRIEENGPSTGSTADLPSSTAPAPGSAAQSPVAAALGPAHSAQSPCTPAPAQPGLNPRVQAARFRFQGNANDPDQNGNTTQSPPSRDVSPTSRDNLVAKQLARNTVTQALSRFTSPAVGAAPRPGAPPTGDAGAYPPVGRTSLKTPGVARVDRGNPPPIPPKKPGLSQTPSPPHPQLKVIMDSSRASNAGAKVDNKTVASPPSSLPQGNRVISEENLPKSSSPQLPPKPSIDLTVAPAGCAVSALATSQVGAWPAETPGLNQPACSDSSLVIPTTTAFRSSINPVSASSCRPGASDSLLVTASGWSPSLTPLLMSGGPAPLAGRPTLLQQAAAQGNVTLLSMLLNEEGLDINYSCEDGHSALYSAAKNGHTDCVRLLLNAEAQVNAADKNGFTPLCAAAAQGHFECVELLIAYDANINHAADGGQTPLYLACKNGNKECIKLLLEAGTDRSVKTRDGWTPVHAAVDTGNVDSLKLLMYHRAPAHGNSLNEEEPESDVSDLDDGEESSEGESKPVVPADLINHADREGWTAAHIAASKGFKNCLEILCRHRGLEPERRDKCNRTVHDVATDDCKHLLENLNALKIPLRISVGEIQSGNYGSSDFECENTICVLHIRKQTSWDDFSKAVSQALTNHFQAISSDGWWSLEDTAFNNTADSDIGLSLDSVRAIMLGSVPWSAGQSFTQSPWDFMRKNKAEQVTVLLSGPQEGCLSSVAYASMIPLQMLQNYLRLVEQYHNVIFHGPEGSLQDYIVHQLALCLKHRQMAAGFSCEIVRAEVDAGFSKEQLVDLFISSACLIPVKQSPVKKKIIIILENLEKSSLSELLGDFLAPLEIRSPESPCTFQKGNGTSECYYFHENCFLMGTIAKACLQGADLLVQQHFRWVQLRWDGEPMHGLLQRFLRRKLVNKFRGQAPSPCDPVCKTIDWALSVWRQLNSCLARLGTPEALLGPKYFLSCPVVPGHAQATVKWMSKLWNAVIAPRVQEAILSRASVKRQPGFGQTTTKKHPSQGQQAVVKAALSILLNKAVLHGCPLPRAELDQHTADFKGGSFPLSLVSNYNSCSKKKENGAWRKVNTSPRRKSGRFSSPTWNKPDLSNEGIKNKTISQLNCNKNASLSKQKSLENDLSLMLNLDPRLSLGSDDEADLVKELQSMCSSKSESDISKIADSRDDLRTFDSSGNNPAFSATVNNPRMPVSQKEVSPLSSHQTTECSNNKSKTEPGVSRVKSFLPVPRSKVTQCSQNTKRSSSSSNTRQIEINNNSKEENWNLHKNEQTHRKT</sequence>
<dbReference type="EMBL" id="DP000022">
    <property type="protein sequence ID" value="ABB89827.1"/>
    <property type="molecule type" value="Genomic_DNA"/>
</dbReference>
<dbReference type="RefSeq" id="XP_012616549.1">
    <property type="nucleotide sequence ID" value="XM_012761095.1"/>
</dbReference>
<dbReference type="SMR" id="Q2QL82"/>
<dbReference type="Ensembl" id="ENSMICT00000005790.3">
    <property type="protein sequence ID" value="ENSMICP00000005282.2"/>
    <property type="gene ID" value="ENSMICG00000005787.3"/>
</dbReference>
<dbReference type="GeneID" id="105869364"/>
<dbReference type="KEGG" id="mmur:105869364"/>
<dbReference type="CTD" id="83992"/>
<dbReference type="GeneTree" id="ENSGT00940000158293"/>
<dbReference type="OrthoDB" id="6021133at2759"/>
<dbReference type="Proteomes" id="UP000694394">
    <property type="component" value="Chromosome 11"/>
</dbReference>
<dbReference type="Bgee" id="ENSMICG00000005787">
    <property type="expression patterns" value="Expressed in frontal cortex and 6 other cell types or tissues"/>
</dbReference>
<dbReference type="GO" id="GO:0005938">
    <property type="term" value="C:cell cortex"/>
    <property type="evidence" value="ECO:0007669"/>
    <property type="project" value="UniProtKB-SubCell"/>
</dbReference>
<dbReference type="GO" id="GO:0043197">
    <property type="term" value="C:dendritic spine"/>
    <property type="evidence" value="ECO:0000250"/>
    <property type="project" value="UniProtKB"/>
</dbReference>
<dbReference type="GO" id="GO:0090443">
    <property type="term" value="C:FAR/SIN/STRIPAK complex"/>
    <property type="evidence" value="ECO:0000250"/>
    <property type="project" value="UniProtKB"/>
</dbReference>
<dbReference type="GO" id="GO:0098978">
    <property type="term" value="C:glutamatergic synapse"/>
    <property type="evidence" value="ECO:0007669"/>
    <property type="project" value="Ensembl"/>
</dbReference>
<dbReference type="GO" id="GO:0098871">
    <property type="term" value="C:postsynaptic actin cytoskeleton"/>
    <property type="evidence" value="ECO:0007669"/>
    <property type="project" value="Ensembl"/>
</dbReference>
<dbReference type="GO" id="GO:0051721">
    <property type="term" value="F:protein phosphatase 2A binding"/>
    <property type="evidence" value="ECO:0007669"/>
    <property type="project" value="TreeGrafter"/>
</dbReference>
<dbReference type="Gene3D" id="1.25.40.20">
    <property type="entry name" value="Ankyrin repeat-containing domain"/>
    <property type="match status" value="1"/>
</dbReference>
<dbReference type="InterPro" id="IPR002110">
    <property type="entry name" value="Ankyrin_rpt"/>
</dbReference>
<dbReference type="InterPro" id="IPR036770">
    <property type="entry name" value="Ankyrin_rpt-contain_sf"/>
</dbReference>
<dbReference type="InterPro" id="IPR050719">
    <property type="entry name" value="Cortactin-Actin_Reg"/>
</dbReference>
<dbReference type="InterPro" id="IPR019131">
    <property type="entry name" value="Cortactin-binding_p2_N"/>
</dbReference>
<dbReference type="PANTHER" id="PTHR23166:SF9">
    <property type="entry name" value="CTTNBP2 N-TERMINAL-LIKE PROTEIN"/>
    <property type="match status" value="1"/>
</dbReference>
<dbReference type="PANTHER" id="PTHR23166">
    <property type="entry name" value="FILAMIN/GPBP-INTERACTING PROTEIN"/>
    <property type="match status" value="1"/>
</dbReference>
<dbReference type="Pfam" id="PF25408">
    <property type="entry name" value="AAA_lid_NAV1"/>
    <property type="match status" value="1"/>
</dbReference>
<dbReference type="Pfam" id="PF00023">
    <property type="entry name" value="Ank"/>
    <property type="match status" value="2"/>
</dbReference>
<dbReference type="Pfam" id="PF12796">
    <property type="entry name" value="Ank_2"/>
    <property type="match status" value="1"/>
</dbReference>
<dbReference type="Pfam" id="PF09727">
    <property type="entry name" value="CortBP2"/>
    <property type="match status" value="1"/>
</dbReference>
<dbReference type="SMART" id="SM00248">
    <property type="entry name" value="ANK"/>
    <property type="match status" value="6"/>
</dbReference>
<dbReference type="SUPFAM" id="SSF48403">
    <property type="entry name" value="Ankyrin repeat"/>
    <property type="match status" value="1"/>
</dbReference>
<dbReference type="PROSITE" id="PS50297">
    <property type="entry name" value="ANK_REP_REGION"/>
    <property type="match status" value="1"/>
</dbReference>
<dbReference type="PROSITE" id="PS50088">
    <property type="entry name" value="ANK_REPEAT"/>
    <property type="match status" value="4"/>
</dbReference>
<accession>Q2QL82</accession>
<organism>
    <name type="scientific">Microcebus murinus</name>
    <name type="common">Gray mouse lemur</name>
    <name type="synonym">Lemur murinus</name>
    <dbReference type="NCBI Taxonomy" id="30608"/>
    <lineage>
        <taxon>Eukaryota</taxon>
        <taxon>Metazoa</taxon>
        <taxon>Chordata</taxon>
        <taxon>Craniata</taxon>
        <taxon>Vertebrata</taxon>
        <taxon>Euteleostomi</taxon>
        <taxon>Mammalia</taxon>
        <taxon>Eutheria</taxon>
        <taxon>Euarchontoglires</taxon>
        <taxon>Primates</taxon>
        <taxon>Strepsirrhini</taxon>
        <taxon>Lemuriformes</taxon>
        <taxon>Cheirogaleidae</taxon>
        <taxon>Microcebus</taxon>
    </lineage>
</organism>
<reference key="1">
    <citation type="submission" date="2005-11" db="EMBL/GenBank/DDBJ databases">
        <title>NISC comparative sequencing initiative.</title>
        <authorList>
            <person name="Antonellis A."/>
            <person name="Ayele K."/>
            <person name="Benjamin B."/>
            <person name="Blakesley R.W."/>
            <person name="Boakye A."/>
            <person name="Bouffard G.G."/>
            <person name="Brinkley C."/>
            <person name="Brooks S."/>
            <person name="Chu G."/>
            <person name="Coleman H."/>
            <person name="Engle J."/>
            <person name="Gestole M."/>
            <person name="Greene A."/>
            <person name="Guan X."/>
            <person name="Gupta J."/>
            <person name="Haghighi P."/>
            <person name="Han J."/>
            <person name="Hansen N."/>
            <person name="Ho S.-L."/>
            <person name="Hu P."/>
            <person name="Hunter G."/>
            <person name="Hurle B."/>
            <person name="Idol J.R."/>
            <person name="Kwong P."/>
            <person name="Laric P."/>
            <person name="Larson S."/>
            <person name="Lee-Lin S.-Q."/>
            <person name="Legaspi R."/>
            <person name="Madden M."/>
            <person name="Maduro Q.L."/>
            <person name="Maduro V.B."/>
            <person name="Margulies E.H."/>
            <person name="Masiello C."/>
            <person name="Maskeri B."/>
            <person name="McDowell J."/>
            <person name="Mojidi H.A."/>
            <person name="Mullikin J.C."/>
            <person name="Oestreicher J.S."/>
            <person name="Park M."/>
            <person name="Portnoy M.E."/>
            <person name="Prasad A."/>
            <person name="Puri O."/>
            <person name="Reddix-Dugue N."/>
            <person name="Schandler K."/>
            <person name="Schueler M.G."/>
            <person name="Sison C."/>
            <person name="Stantripop S."/>
            <person name="Stephen E."/>
            <person name="Taye A."/>
            <person name="Thomas J.W."/>
            <person name="Thomas P.J."/>
            <person name="Tsipouri V."/>
            <person name="Ung L."/>
            <person name="Vogt J.L."/>
            <person name="Wetherby K.D."/>
            <person name="Young A."/>
            <person name="Green E.D."/>
        </authorList>
    </citation>
    <scope>NUCLEOTIDE SEQUENCE [LARGE SCALE GENOMIC DNA]</scope>
</reference>
<gene>
    <name type="primary">CTTNBP2</name>
    <name type="synonym">CORTBP2</name>
</gene>
<keyword id="KW-0040">ANK repeat</keyword>
<keyword id="KW-0966">Cell projection</keyword>
<keyword id="KW-0175">Coiled coil</keyword>
<keyword id="KW-0963">Cytoplasm</keyword>
<keyword id="KW-0488">Methylation</keyword>
<keyword id="KW-0597">Phosphoprotein</keyword>
<keyword id="KW-1185">Reference proteome</keyword>
<keyword id="KW-0677">Repeat</keyword>
<keyword id="KW-0770">Synapse</keyword>
<protein>
    <recommendedName>
        <fullName>Cortactin-binding protein 2</fullName>
        <shortName>CortBP2</shortName>
    </recommendedName>
</protein>
<comment type="function">
    <text evidence="2">Regulates the dendritic spine distribution of CTTN/cortactin in hippocampal neurons, and thus controls dendritic spinogenesis and dendritic spine maintenance. Associates with the striatin-interacting phosphatase and kinase (STRIPAK) core complex to regulate dendritic spine distribution of the STRIPAK complex in hippocampal neurons.</text>
</comment>
<comment type="subunit">
    <text evidence="2">Interacts with CTTN/cortactin SH3 domain. Interacts with STRN, STRN4/zinedin and MOB4/phocein; this interactions mediate the association with the STRIPAK core complex and may regulate dendritic spine distribution of the STRIPAK complex in hippocampal neurons. Activation of glutamate receptors weakens the interaction with STRN and STRN4.</text>
</comment>
<comment type="subcellular location">
    <subcellularLocation>
        <location evidence="1">Cytoplasm</location>
        <location evidence="1">Cell cortex</location>
    </subcellularLocation>
    <subcellularLocation>
        <location evidence="2">Cell projection</location>
        <location evidence="2">Dendritic spine</location>
    </subcellularLocation>
    <text evidence="2">Remains associated with dendritic spines even after glutamate stimulation.</text>
</comment>
<name>CTTB2_MICMU</name>
<feature type="chain" id="PRO_0000227003" description="Cortactin-binding protein 2">
    <location>
        <begin position="1"/>
        <end position="1647"/>
    </location>
</feature>
<feature type="repeat" description="ANK 1">
    <location>
        <begin position="695"/>
        <end position="725"/>
    </location>
</feature>
<feature type="repeat" description="ANK 2">
    <location>
        <begin position="729"/>
        <end position="758"/>
    </location>
</feature>
<feature type="repeat" description="ANK 3">
    <location>
        <begin position="762"/>
        <end position="791"/>
    </location>
</feature>
<feature type="repeat" description="ANK 4">
    <location>
        <begin position="795"/>
        <end position="824"/>
    </location>
</feature>
<feature type="repeat" description="ANK 5">
    <location>
        <begin position="828"/>
        <end position="857"/>
    </location>
</feature>
<feature type="repeat" description="ANK 6">
    <location>
        <begin position="898"/>
        <end position="928"/>
    </location>
</feature>
<feature type="region of interest" description="Disordered" evidence="5">
    <location>
        <begin position="1"/>
        <end position="27"/>
    </location>
</feature>
<feature type="region of interest" description="Disordered" evidence="5">
    <location>
        <begin position="202"/>
        <end position="222"/>
    </location>
</feature>
<feature type="region of interest" description="Disordered" evidence="5">
    <location>
        <begin position="318"/>
        <end position="427"/>
    </location>
</feature>
<feature type="region of interest" description="Disordered" evidence="5">
    <location>
        <begin position="440"/>
        <end position="468"/>
    </location>
</feature>
<feature type="region of interest" description="Disordered" evidence="5">
    <location>
        <begin position="482"/>
        <end position="604"/>
    </location>
</feature>
<feature type="region of interest" description="Disordered" evidence="5">
    <location>
        <begin position="856"/>
        <end position="886"/>
    </location>
</feature>
<feature type="region of interest" description="Disordered" evidence="5">
    <location>
        <begin position="1436"/>
        <end position="1467"/>
    </location>
</feature>
<feature type="region of interest" description="Disordered" evidence="5">
    <location>
        <begin position="1542"/>
        <end position="1647"/>
    </location>
</feature>
<feature type="coiled-coil region" evidence="4">
    <location>
        <begin position="120"/>
        <end position="276"/>
    </location>
</feature>
<feature type="compositionally biased region" description="Low complexity" evidence="5">
    <location>
        <begin position="362"/>
        <end position="372"/>
    </location>
</feature>
<feature type="compositionally biased region" description="Polar residues" evidence="5">
    <location>
        <begin position="379"/>
        <end position="388"/>
    </location>
</feature>
<feature type="compositionally biased region" description="Low complexity" evidence="5">
    <location>
        <begin position="389"/>
        <end position="411"/>
    </location>
</feature>
<feature type="compositionally biased region" description="Polar residues" evidence="5">
    <location>
        <begin position="440"/>
        <end position="466"/>
    </location>
</feature>
<feature type="compositionally biased region" description="Low complexity" evidence="5">
    <location>
        <begin position="488"/>
        <end position="509"/>
    </location>
</feature>
<feature type="compositionally biased region" description="Polar residues" evidence="5">
    <location>
        <begin position="569"/>
        <end position="579"/>
    </location>
</feature>
<feature type="compositionally biased region" description="Acidic residues" evidence="5">
    <location>
        <begin position="861"/>
        <end position="880"/>
    </location>
</feature>
<feature type="compositionally biased region" description="Polar residues" evidence="5">
    <location>
        <begin position="1544"/>
        <end position="1559"/>
    </location>
</feature>
<feature type="compositionally biased region" description="Polar residues" evidence="5">
    <location>
        <begin position="1567"/>
        <end position="1584"/>
    </location>
</feature>
<feature type="compositionally biased region" description="Low complexity" evidence="5">
    <location>
        <begin position="1609"/>
        <end position="1623"/>
    </location>
</feature>
<feature type="compositionally biased region" description="Basic and acidic residues" evidence="5">
    <location>
        <begin position="1630"/>
        <end position="1647"/>
    </location>
</feature>
<feature type="modified residue" description="Asymmetric dimethylarginine" evidence="1">
    <location>
        <position position="484"/>
    </location>
</feature>
<feature type="modified residue" description="Phosphoserine" evidence="3">
    <location>
        <position position="1509"/>
    </location>
</feature>